<gene>
    <name evidence="1" type="primary">klhdc10</name>
</gene>
<feature type="chain" id="PRO_0000319439" description="Kelch domain-containing protein 10">
    <location>
        <begin position="1"/>
        <end position="411"/>
    </location>
</feature>
<feature type="repeat" description="Kelch 1">
    <location>
        <begin position="72"/>
        <end position="133"/>
    </location>
</feature>
<feature type="repeat" description="Kelch 2">
    <location>
        <begin position="135"/>
        <end position="186"/>
    </location>
</feature>
<feature type="repeat" description="Kelch 3">
    <location>
        <begin position="187"/>
        <end position="239"/>
    </location>
</feature>
<feature type="repeat" description="Kelch 4">
    <location>
        <begin position="240"/>
        <end position="288"/>
    </location>
</feature>
<feature type="repeat" description="Kelch 5">
    <location>
        <begin position="296"/>
        <end position="342"/>
    </location>
</feature>
<feature type="repeat" description="Kelch 6">
    <location>
        <begin position="345"/>
        <end position="388"/>
    </location>
</feature>
<protein>
    <recommendedName>
        <fullName evidence="2">Kelch domain-containing protein 10</fullName>
    </recommendedName>
</protein>
<keyword id="KW-0880">Kelch repeat</keyword>
<keyword id="KW-1185">Reference proteome</keyword>
<keyword id="KW-0677">Repeat</keyword>
<keyword id="KW-0833">Ubl conjugation pathway</keyword>
<name>KLD10_XENLA</name>
<proteinExistence type="evidence at transcript level"/>
<sequence length="411" mass="46759">MAAEAGGGEPLVKFVKLSGRAAGSKKKVRWFPVRRLFTHSCPSLRIPSRFLREGRRSPPARSGHRCVADNTNLYVFGGYNPDYDESGGPENEDYPLFRELWRYHFATGMWHQMGTDGHMPRELASMSLVLHGHNLLVFGGTGIPFGESNGNDVYVCNVRYKRWSKLNCRGKKPNRIYGQAMAIIHGFLYVFGGTTGYIYSTDLHRLDLSTREWIQLRPNNPPCDLPEERYRHEIAHDGQRIYVLGGGTSWTAYSLEKIHAYNFETNTWEDIPTKPHGNLGFPAARRCHSCVQIKNEVFICGGYNGLVILGDLWKLNLQTFQWTKLPALMPEPAYFHCAAVTPAGCMYIHGGVVNIQQNKRTGSLFKIWLTVPSLLELCWENLLKYFPQLCQLPTHQLLQLGLSQELIERLK</sequence>
<organism>
    <name type="scientific">Xenopus laevis</name>
    <name type="common">African clawed frog</name>
    <dbReference type="NCBI Taxonomy" id="8355"/>
    <lineage>
        <taxon>Eukaryota</taxon>
        <taxon>Metazoa</taxon>
        <taxon>Chordata</taxon>
        <taxon>Craniata</taxon>
        <taxon>Vertebrata</taxon>
        <taxon>Euteleostomi</taxon>
        <taxon>Amphibia</taxon>
        <taxon>Batrachia</taxon>
        <taxon>Anura</taxon>
        <taxon>Pipoidea</taxon>
        <taxon>Pipidae</taxon>
        <taxon>Xenopodinae</taxon>
        <taxon>Xenopus</taxon>
        <taxon>Xenopus</taxon>
    </lineage>
</organism>
<evidence type="ECO:0000250" key="1">
    <source>
        <dbReference type="UniProtKB" id="Q6PID8"/>
    </source>
</evidence>
<evidence type="ECO:0000305" key="2"/>
<dbReference type="EMBL" id="BC084804">
    <property type="protein sequence ID" value="AAH84804.1"/>
    <property type="molecule type" value="mRNA"/>
</dbReference>
<dbReference type="RefSeq" id="NP_001088477.1">
    <property type="nucleotide sequence ID" value="NM_001095008.1"/>
</dbReference>
<dbReference type="SMR" id="Q5U580"/>
<dbReference type="BioGRID" id="105422">
    <property type="interactions" value="1"/>
</dbReference>
<dbReference type="DNASU" id="495342"/>
<dbReference type="GeneID" id="495342"/>
<dbReference type="KEGG" id="xla:495342"/>
<dbReference type="AGR" id="Xenbase:XB-GENE-6253965"/>
<dbReference type="CTD" id="495342"/>
<dbReference type="Xenbase" id="XB-GENE-6253965">
    <property type="gene designation" value="klhdc10.L"/>
</dbReference>
<dbReference type="OrthoDB" id="7676067at2759"/>
<dbReference type="UniPathway" id="UPA00143"/>
<dbReference type="Proteomes" id="UP000186698">
    <property type="component" value="Chromosome 3L"/>
</dbReference>
<dbReference type="Bgee" id="495342">
    <property type="expression patterns" value="Expressed in egg cell and 19 other cell types or tissues"/>
</dbReference>
<dbReference type="GO" id="GO:0032874">
    <property type="term" value="P:positive regulation of stress-activated MAPK cascade"/>
    <property type="evidence" value="ECO:0000318"/>
    <property type="project" value="GO_Central"/>
</dbReference>
<dbReference type="GO" id="GO:0016567">
    <property type="term" value="P:protein ubiquitination"/>
    <property type="evidence" value="ECO:0007669"/>
    <property type="project" value="UniProtKB-UniPathway"/>
</dbReference>
<dbReference type="GO" id="GO:0072344">
    <property type="term" value="P:rescue of stalled ribosome"/>
    <property type="evidence" value="ECO:0000250"/>
    <property type="project" value="UniProtKB"/>
</dbReference>
<dbReference type="FunFam" id="2.120.10.80:FF:000009">
    <property type="entry name" value="Kelch domain-containing protein 10"/>
    <property type="match status" value="1"/>
</dbReference>
<dbReference type="FunFam" id="2.120.10.80:FF:000010">
    <property type="entry name" value="kelch domain-containing protein 10"/>
    <property type="match status" value="1"/>
</dbReference>
<dbReference type="Gene3D" id="2.120.10.80">
    <property type="entry name" value="Kelch-type beta propeller"/>
    <property type="match status" value="2"/>
</dbReference>
<dbReference type="InterPro" id="IPR015915">
    <property type="entry name" value="Kelch-typ_b-propeller"/>
</dbReference>
<dbReference type="InterPro" id="IPR006652">
    <property type="entry name" value="Kelch_1"/>
</dbReference>
<dbReference type="InterPro" id="IPR052125">
    <property type="entry name" value="KLHDC10"/>
</dbReference>
<dbReference type="PANTHER" id="PTHR46428">
    <property type="entry name" value="KELCH DOMAIN-CONTAINING PROTEIN 10"/>
    <property type="match status" value="1"/>
</dbReference>
<dbReference type="PANTHER" id="PTHR46428:SF1">
    <property type="entry name" value="KELCH DOMAIN-CONTAINING PROTEIN 10"/>
    <property type="match status" value="1"/>
</dbReference>
<dbReference type="Pfam" id="PF13418">
    <property type="entry name" value="Kelch_4"/>
    <property type="match status" value="1"/>
</dbReference>
<dbReference type="Pfam" id="PF24681">
    <property type="entry name" value="Kelch_KLHDC2_KLHL20_DRC7"/>
    <property type="match status" value="1"/>
</dbReference>
<dbReference type="SMART" id="SM00612">
    <property type="entry name" value="Kelch"/>
    <property type="match status" value="2"/>
</dbReference>
<dbReference type="SUPFAM" id="SSF75011">
    <property type="entry name" value="3-carboxy-cis,cis-mucoante lactonizing enzyme"/>
    <property type="match status" value="1"/>
</dbReference>
<dbReference type="SUPFAM" id="SSF117281">
    <property type="entry name" value="Kelch motif"/>
    <property type="match status" value="1"/>
</dbReference>
<comment type="function">
    <text evidence="1">Substrate-recognition component of a Cul2-RING (CRL2) E3 ubiquitin-protein ligase complex of the DesCEND (destruction via C-end degrons) pathway, which recognizes a C-degron located at the extreme C terminus of target proteins, leading to their ubiquitination and degradation. The C-degron recognized by the DesCEND pathway is usually a motif of less than ten residues and can be present in full-length proteins, truncated proteins or proteolytically cleaved forms. The CRL2(KLHDC10) complex specifically recognizes proteins with a proline-glycine (Pro-Gly) or an alanine tail (CAT tail) at the C-terminus, leading to their ubiquitination and degradation. The CRL2(KLHDC10) complex is involved in the ribosome-associated quality control (RQC) pathway, which mediates the extraction of incompletely synthesized nascent chains from stalled ribosomes: CRL2(KLHDC10) acts downstream of NEMF and recognizes CAT tails associated with stalled nascent chains, leading to their ubiquitination and degradation.</text>
</comment>
<comment type="pathway">
    <text evidence="1">Protein modification; protein ubiquitination.</text>
</comment>
<comment type="subunit">
    <text evidence="1">Component of a CRL2 E3 ubiquitin-protein ligase complex, also named ECS (Elongin BC-CUL2/5-SOCS-box protein) complex, composed of CUL2, Elongin BC (ELOB and ELOC), RBX1 and substrate-specific adapter KLHDC10.</text>
</comment>
<comment type="similarity">
    <text evidence="2">Belongs to the KLHDC10 family.</text>
</comment>
<accession>Q5U580</accession>
<reference key="1">
    <citation type="submission" date="2004-10" db="EMBL/GenBank/DDBJ databases">
        <authorList>
            <consortium name="NIH - Xenopus Gene Collection (XGC) project"/>
        </authorList>
    </citation>
    <scope>NUCLEOTIDE SEQUENCE [LARGE SCALE MRNA]</scope>
    <source>
        <tissue>Oocyte</tissue>
    </source>
</reference>